<feature type="chain" id="PRO_0000157447" description="UPF0324 inner membrane protein YeiH">
    <location>
        <begin position="1"/>
        <end position="349"/>
    </location>
</feature>
<feature type="topological domain" description="Periplasmic" evidence="2">
    <location>
        <begin position="1"/>
        <end position="12"/>
    </location>
</feature>
<feature type="transmembrane region" description="Helical" evidence="2">
    <location>
        <begin position="13"/>
        <end position="35"/>
    </location>
</feature>
<feature type="topological domain" description="Cytoplasmic" evidence="2">
    <location>
        <begin position="36"/>
        <end position="38"/>
    </location>
</feature>
<feature type="transmembrane region" description="Helical" evidence="2">
    <location>
        <begin position="39"/>
        <end position="61"/>
    </location>
</feature>
<feature type="topological domain" description="Periplasmic" evidence="2">
    <location>
        <begin position="62"/>
        <end position="99"/>
    </location>
</feature>
<feature type="transmembrane region" description="Helical" evidence="2">
    <location>
        <begin position="100"/>
        <end position="122"/>
    </location>
</feature>
<feature type="topological domain" description="Cytoplasmic" evidence="2">
    <location>
        <begin position="123"/>
        <end position="131"/>
    </location>
</feature>
<feature type="transmembrane region" description="Helical" evidence="2">
    <location>
        <begin position="132"/>
        <end position="151"/>
    </location>
</feature>
<feature type="topological domain" description="Periplasmic" evidence="2">
    <location>
        <begin position="152"/>
        <end position="162"/>
    </location>
</feature>
<feature type="transmembrane region" description="Helical" evidence="2">
    <location>
        <begin position="163"/>
        <end position="185"/>
    </location>
</feature>
<feature type="topological domain" description="Cytoplasmic" evidence="2">
    <location>
        <begin position="186"/>
        <end position="261"/>
    </location>
</feature>
<feature type="transmembrane region" description="Helical" evidence="2">
    <location>
        <begin position="262"/>
        <end position="284"/>
    </location>
</feature>
<feature type="topological domain" description="Periplasmic" evidence="2">
    <location>
        <begin position="285"/>
        <end position="290"/>
    </location>
</feature>
<feature type="transmembrane region" description="Helical" evidence="2">
    <location>
        <begin position="291"/>
        <end position="313"/>
    </location>
</feature>
<feature type="topological domain" description="Cytoplasmic" evidence="2">
    <location>
        <begin position="314"/>
        <end position="322"/>
    </location>
</feature>
<feature type="transmembrane region" description="Helical" evidence="2">
    <location>
        <begin position="323"/>
        <end position="345"/>
    </location>
</feature>
<feature type="topological domain" description="Periplasmic" evidence="2">
    <location>
        <begin position="346"/>
        <end position="349"/>
    </location>
</feature>
<evidence type="ECO:0000250" key="1"/>
<evidence type="ECO:0000255" key="2"/>
<evidence type="ECO:0000305" key="3"/>
<keyword id="KW-0997">Cell inner membrane</keyword>
<keyword id="KW-1003">Cell membrane</keyword>
<keyword id="KW-0472">Membrane</keyword>
<keyword id="KW-0812">Transmembrane</keyword>
<keyword id="KW-1133">Transmembrane helix</keyword>
<comment type="subcellular location">
    <subcellularLocation>
        <location evidence="1">Cell inner membrane</location>
        <topology evidence="1">Multi-pass membrane protein</topology>
    </subcellularLocation>
</comment>
<comment type="similarity">
    <text evidence="3">Belongs to the UPF0324 family.</text>
</comment>
<name>YEIH_SALTI</name>
<reference key="1">
    <citation type="journal article" date="2001" name="Nature">
        <title>Complete genome sequence of a multiple drug resistant Salmonella enterica serovar Typhi CT18.</title>
        <authorList>
            <person name="Parkhill J."/>
            <person name="Dougan G."/>
            <person name="James K.D."/>
            <person name="Thomson N.R."/>
            <person name="Pickard D."/>
            <person name="Wain J."/>
            <person name="Churcher C.M."/>
            <person name="Mungall K.L."/>
            <person name="Bentley S.D."/>
            <person name="Holden M.T.G."/>
            <person name="Sebaihia M."/>
            <person name="Baker S."/>
            <person name="Basham D."/>
            <person name="Brooks K."/>
            <person name="Chillingworth T."/>
            <person name="Connerton P."/>
            <person name="Cronin A."/>
            <person name="Davis P."/>
            <person name="Davies R.M."/>
            <person name="Dowd L."/>
            <person name="White N."/>
            <person name="Farrar J."/>
            <person name="Feltwell T."/>
            <person name="Hamlin N."/>
            <person name="Haque A."/>
            <person name="Hien T.T."/>
            <person name="Holroyd S."/>
            <person name="Jagels K."/>
            <person name="Krogh A."/>
            <person name="Larsen T.S."/>
            <person name="Leather S."/>
            <person name="Moule S."/>
            <person name="O'Gaora P."/>
            <person name="Parry C."/>
            <person name="Quail M.A."/>
            <person name="Rutherford K.M."/>
            <person name="Simmonds M."/>
            <person name="Skelton J."/>
            <person name="Stevens K."/>
            <person name="Whitehead S."/>
            <person name="Barrell B.G."/>
        </authorList>
    </citation>
    <scope>NUCLEOTIDE SEQUENCE [LARGE SCALE GENOMIC DNA]</scope>
    <source>
        <strain>CT18</strain>
    </source>
</reference>
<reference key="2">
    <citation type="journal article" date="2003" name="J. Bacteriol.">
        <title>Comparative genomics of Salmonella enterica serovar Typhi strains Ty2 and CT18.</title>
        <authorList>
            <person name="Deng W."/>
            <person name="Liou S.-R."/>
            <person name="Plunkett G. III"/>
            <person name="Mayhew G.F."/>
            <person name="Rose D.J."/>
            <person name="Burland V."/>
            <person name="Kodoyianni V."/>
            <person name="Schwartz D.C."/>
            <person name="Blattner F.R."/>
        </authorList>
    </citation>
    <scope>NUCLEOTIDE SEQUENCE [LARGE SCALE GENOMIC DNA]</scope>
    <source>
        <strain>ATCC 700931 / Ty2</strain>
    </source>
</reference>
<accession>Q7CB38</accession>
<accession>Q8Z594</accession>
<sequence>MTELTLQNHRRTMWHFIPGLALSAVITGVALWGGAIPAVAGAGFSALTLAILLGMVIGNTVYPQIWKQCDGGVLFAKQHLLRLGIILYGFRLTFSQIADVGISGIVIDVLTLSSTFMLACFLGQKVFGLDRHTSWLIGAGSSICGAAAVLATEPVVKAEASKVTVAVATVVIFGTIAIFLYPAMYPLLAHWFSPETYGIYIGSTMHEVAQVVAAGHAVSPDAENAAVIAKMLRVMMLAPFLIILAARVKQLSPATGAEKSKITIPWFAIFFIVVAIFNSFHLLPKAVVDMLVTLDTVLLAMAMAALGLTTHVSALKKAGAKPLLMALALFAWLIIGGGAINVLIHSLIA</sequence>
<protein>
    <recommendedName>
        <fullName>UPF0324 inner membrane protein YeiH</fullName>
    </recommendedName>
</protein>
<organism>
    <name type="scientific">Salmonella typhi</name>
    <dbReference type="NCBI Taxonomy" id="90370"/>
    <lineage>
        <taxon>Bacteria</taxon>
        <taxon>Pseudomonadati</taxon>
        <taxon>Pseudomonadota</taxon>
        <taxon>Gammaproteobacteria</taxon>
        <taxon>Enterobacterales</taxon>
        <taxon>Enterobacteriaceae</taxon>
        <taxon>Salmonella</taxon>
    </lineage>
</organism>
<dbReference type="EMBL" id="AL513382">
    <property type="protein sequence ID" value="CAD02584.1"/>
    <property type="molecule type" value="Genomic_DNA"/>
</dbReference>
<dbReference type="EMBL" id="AE014613">
    <property type="protein sequence ID" value="AAO68354.1"/>
    <property type="molecule type" value="Genomic_DNA"/>
</dbReference>
<dbReference type="RefSeq" id="NP_456760.1">
    <property type="nucleotide sequence ID" value="NC_003198.1"/>
</dbReference>
<dbReference type="RefSeq" id="WP_000137966.1">
    <property type="nucleotide sequence ID" value="NZ_WSUR01000002.1"/>
</dbReference>
<dbReference type="STRING" id="220341.gene:17586339"/>
<dbReference type="KEGG" id="stt:t0653"/>
<dbReference type="KEGG" id="sty:STY2437"/>
<dbReference type="PATRIC" id="fig|220341.7.peg.2464"/>
<dbReference type="eggNOG" id="COG2855">
    <property type="taxonomic scope" value="Bacteria"/>
</dbReference>
<dbReference type="HOGENOM" id="CLU_033541_0_0_6"/>
<dbReference type="OMA" id="LTRALWI"/>
<dbReference type="OrthoDB" id="9805703at2"/>
<dbReference type="Proteomes" id="UP000000541">
    <property type="component" value="Chromosome"/>
</dbReference>
<dbReference type="Proteomes" id="UP000002670">
    <property type="component" value="Chromosome"/>
</dbReference>
<dbReference type="GO" id="GO:0005886">
    <property type="term" value="C:plasma membrane"/>
    <property type="evidence" value="ECO:0007669"/>
    <property type="project" value="UniProtKB-SubCell"/>
</dbReference>
<dbReference type="InterPro" id="IPR018383">
    <property type="entry name" value="UPF0324_pro"/>
</dbReference>
<dbReference type="InterPro" id="IPR004630">
    <property type="entry name" value="UPF0324_YeiH-like"/>
</dbReference>
<dbReference type="NCBIfam" id="TIGR00698">
    <property type="entry name" value="YeiH family putative sulfate export transporter"/>
    <property type="match status" value="1"/>
</dbReference>
<dbReference type="PANTHER" id="PTHR30106">
    <property type="entry name" value="INNER MEMBRANE PROTEIN YEIH-RELATED"/>
    <property type="match status" value="1"/>
</dbReference>
<dbReference type="PANTHER" id="PTHR30106:SF2">
    <property type="entry name" value="UPF0324 INNER MEMBRANE PROTEIN YEIH"/>
    <property type="match status" value="1"/>
</dbReference>
<dbReference type="Pfam" id="PF03601">
    <property type="entry name" value="Cons_hypoth698"/>
    <property type="match status" value="1"/>
</dbReference>
<proteinExistence type="inferred from homology"/>
<gene>
    <name type="primary">yeiH</name>
    <name type="ordered locus">STY2437</name>
    <name type="ordered locus">t0653</name>
</gene>